<keyword id="KW-0025">Alternative splicing</keyword>
<keyword id="KW-0963">Cytoplasm</keyword>
<keyword id="KW-0225">Disease variant</keyword>
<keyword id="KW-0539">Nucleus</keyword>
<keyword id="KW-1185">Reference proteome</keyword>
<feature type="chain" id="PRO_0000260082" description="Protein SSUH2 homolog">
    <location>
        <begin position="1"/>
        <end position="375"/>
    </location>
</feature>
<feature type="splice variant" id="VSP_061237" description="In isoform 3.">
    <location>
        <begin position="1"/>
        <end position="73"/>
    </location>
</feature>
<feature type="splice variant" id="VSP_061238" description="In isoform 1.">
    <original>MDRDLNEDDSVVDLSFEAESPLAPPTELLERLPSYDWLLQGGRGQIFFPPLEAPGRPQEQRSWPSFLEH</original>
    <variation>MPSPVGLLRALPLPWPQFLACTLRRLAGPRESTGPSQKPPPLCSVPC</variation>
    <location>
        <begin position="1"/>
        <end position="69"/>
    </location>
</feature>
<feature type="sequence variant" id="VAR_033659" description="In dbSNP:rs2276800.">
    <original>P</original>
    <variation>L</variation>
    <location>
        <position position="50"/>
    </location>
</feature>
<feature type="sequence variant" id="VAR_078099" description="Found in patients with dentin dysplasia; likely pathogenic; decreased protein abundance; no effect on nuclear localization; dbSNP:rs140981580." evidence="2">
    <original>P</original>
    <variation>Q</variation>
    <location>
        <position position="140"/>
    </location>
</feature>
<feature type="sequence conflict" description="In Ref. 2; BAH13229." evidence="3" ref="2">
    <original>E</original>
    <variation>G</variation>
    <location>
        <position position="243"/>
    </location>
</feature>
<proteinExistence type="evidence at protein level"/>
<dbReference type="EMBL" id="AB024705">
    <property type="protein sequence ID" value="BAA76932.1"/>
    <property type="molecule type" value="mRNA"/>
</dbReference>
<dbReference type="EMBL" id="AK093066">
    <property type="protein sequence ID" value="BAG52646.1"/>
    <property type="molecule type" value="mRNA"/>
</dbReference>
<dbReference type="EMBL" id="AK300175">
    <property type="protein sequence ID" value="BAH13229.1"/>
    <property type="molecule type" value="mRNA"/>
</dbReference>
<dbReference type="EMBL" id="AC034187">
    <property type="status" value="NOT_ANNOTATED_CDS"/>
    <property type="molecule type" value="Genomic_DNA"/>
</dbReference>
<dbReference type="EMBL" id="AC068312">
    <property type="status" value="NOT_ANNOTATED_CDS"/>
    <property type="molecule type" value="Genomic_DNA"/>
</dbReference>
<dbReference type="EMBL" id="CH471055">
    <property type="protein sequence ID" value="EAW63941.1"/>
    <property type="molecule type" value="Genomic_DNA"/>
</dbReference>
<dbReference type="EMBL" id="BC052614">
    <property type="protein sequence ID" value="AAH52614.1"/>
    <property type="molecule type" value="mRNA"/>
</dbReference>
<dbReference type="CCDS" id="CCDS2568.2">
    <molecule id="Q9Y2M2-3"/>
</dbReference>
<dbReference type="CCDS" id="CCDS58815.1">
    <molecule id="Q9Y2M2-2"/>
</dbReference>
<dbReference type="PIR" id="T44500">
    <property type="entry name" value="T44500"/>
</dbReference>
<dbReference type="RefSeq" id="NP_001243677.1">
    <molecule id="Q9Y2M2-2"/>
    <property type="nucleotide sequence ID" value="NM_001256748.3"/>
</dbReference>
<dbReference type="RefSeq" id="NP_001243678.1">
    <molecule id="Q9Y2M2-3"/>
    <property type="nucleotide sequence ID" value="NM_001256749.3"/>
</dbReference>
<dbReference type="RefSeq" id="NP_057015.2">
    <molecule id="Q9Y2M2-3"/>
    <property type="nucleotide sequence ID" value="NM_015931.4"/>
</dbReference>
<dbReference type="RefSeq" id="XP_016862027.1">
    <property type="nucleotide sequence ID" value="XM_017006538.1"/>
</dbReference>
<dbReference type="RefSeq" id="XP_016862028.1">
    <property type="nucleotide sequence ID" value="XM_017006539.1"/>
</dbReference>
<dbReference type="RefSeq" id="XP_016862029.1">
    <property type="nucleotide sequence ID" value="XM_017006540.1"/>
</dbReference>
<dbReference type="RefSeq" id="XP_016862030.1">
    <molecule id="Q9Y2M2-1"/>
    <property type="nucleotide sequence ID" value="XM_017006541.2"/>
</dbReference>
<dbReference type="RefSeq" id="XP_016862031.1">
    <molecule id="Q9Y2M2-1"/>
    <property type="nucleotide sequence ID" value="XM_017006542.2"/>
</dbReference>
<dbReference type="BioGRID" id="119257">
    <property type="interactions" value="216"/>
</dbReference>
<dbReference type="FunCoup" id="Q9Y2M2">
    <property type="interactions" value="1062"/>
</dbReference>
<dbReference type="IntAct" id="Q9Y2M2">
    <property type="interactions" value="200"/>
</dbReference>
<dbReference type="MINT" id="Q9Y2M2"/>
<dbReference type="STRING" id="9606.ENSP00000439378"/>
<dbReference type="iPTMnet" id="Q9Y2M2"/>
<dbReference type="PhosphoSitePlus" id="Q9Y2M2"/>
<dbReference type="BioMuta" id="SSUH2"/>
<dbReference type="DMDM" id="74721317"/>
<dbReference type="MassIVE" id="Q9Y2M2"/>
<dbReference type="PaxDb" id="9606-ENSP00000439378"/>
<dbReference type="PeptideAtlas" id="Q9Y2M2"/>
<dbReference type="ProteomicsDB" id="26057"/>
<dbReference type="ProteomicsDB" id="85843">
    <molecule id="Q9Y2M2-1"/>
</dbReference>
<dbReference type="Antibodypedia" id="53444">
    <property type="antibodies" value="65 antibodies from 11 providers"/>
</dbReference>
<dbReference type="DNASU" id="51066"/>
<dbReference type="Ensembl" id="ENST00000317371.8">
    <molecule id="Q9Y2M2-3"/>
    <property type="protein sequence ID" value="ENSP00000324551.5"/>
    <property type="gene ID" value="ENSG00000125046.16"/>
</dbReference>
<dbReference type="Ensembl" id="ENST00000341795.7">
    <molecule id="Q9Y2M2-3"/>
    <property type="protein sequence ID" value="ENSP00000339150.4"/>
    <property type="gene ID" value="ENSG00000125046.16"/>
</dbReference>
<dbReference type="Ensembl" id="ENST00000420394.5">
    <molecule id="Q9Y2M2-3"/>
    <property type="protein sequence ID" value="ENSP00000390328.2"/>
    <property type="gene ID" value="ENSG00000125046.16"/>
</dbReference>
<dbReference type="Ensembl" id="ENST00000435138.5">
    <molecule id="Q9Y2M2-3"/>
    <property type="protein sequence ID" value="ENSP00000412333.2"/>
    <property type="gene ID" value="ENSG00000125046.16"/>
</dbReference>
<dbReference type="Ensembl" id="ENST00000544814.7">
    <molecule id="Q9Y2M2-2"/>
    <property type="protein sequence ID" value="ENSP00000439378.1"/>
    <property type="gene ID" value="ENSG00000125046.16"/>
</dbReference>
<dbReference type="GeneID" id="51066"/>
<dbReference type="KEGG" id="hsa:51066"/>
<dbReference type="MANE-Select" id="ENST00000544814.7">
    <property type="protein sequence ID" value="ENSP00000439378.1"/>
    <property type="RefSeq nucleotide sequence ID" value="NM_001256748.3"/>
    <property type="RefSeq protein sequence ID" value="NP_001243677.1"/>
</dbReference>
<dbReference type="UCSC" id="uc003bqu.5">
    <molecule id="Q9Y2M2-2"/>
    <property type="organism name" value="human"/>
</dbReference>
<dbReference type="AGR" id="HGNC:24809"/>
<dbReference type="CTD" id="51066"/>
<dbReference type="DisGeNET" id="51066"/>
<dbReference type="GeneCards" id="SSUH2"/>
<dbReference type="HGNC" id="HGNC:24809">
    <property type="gene designation" value="SSUH2"/>
</dbReference>
<dbReference type="HPA" id="ENSG00000125046">
    <property type="expression patterns" value="Tissue enhanced (intestine, testis)"/>
</dbReference>
<dbReference type="MalaCards" id="SSUH2"/>
<dbReference type="MIM" id="617479">
    <property type="type" value="gene"/>
</dbReference>
<dbReference type="neXtProt" id="NX_Q9Y2M2"/>
<dbReference type="OpenTargets" id="ENSG00000125046"/>
<dbReference type="Orphanet" id="99789">
    <property type="disease" value="Dentin dysplasia type I"/>
</dbReference>
<dbReference type="PharmGKB" id="PA142672393"/>
<dbReference type="VEuPathDB" id="HostDB:ENSG00000125046"/>
<dbReference type="eggNOG" id="KOG2813">
    <property type="taxonomic scope" value="Eukaryota"/>
</dbReference>
<dbReference type="GeneTree" id="ENSGT00440000038003"/>
<dbReference type="HOGENOM" id="CLU_044550_2_0_1"/>
<dbReference type="InParanoid" id="Q9Y2M2"/>
<dbReference type="OMA" id="KRCNTCS"/>
<dbReference type="OrthoDB" id="3355217at2759"/>
<dbReference type="PAN-GO" id="Q9Y2M2">
    <property type="GO annotations" value="0 GO annotations based on evolutionary models"/>
</dbReference>
<dbReference type="PhylomeDB" id="Q9Y2M2"/>
<dbReference type="TreeFam" id="TF320855"/>
<dbReference type="PathwayCommons" id="Q9Y2M2"/>
<dbReference type="SignaLink" id="Q9Y2M2"/>
<dbReference type="BioGRID-ORCS" id="51066">
    <property type="hits" value="11 hits in 1147 CRISPR screens"/>
</dbReference>
<dbReference type="ChiTaRS" id="SSUH2">
    <property type="organism name" value="human"/>
</dbReference>
<dbReference type="GenomeRNAi" id="51066"/>
<dbReference type="Pharos" id="Q9Y2M2">
    <property type="development level" value="Tbio"/>
</dbReference>
<dbReference type="PRO" id="PR:Q9Y2M2"/>
<dbReference type="Proteomes" id="UP000005640">
    <property type="component" value="Chromosome 3"/>
</dbReference>
<dbReference type="RNAct" id="Q9Y2M2">
    <property type="molecule type" value="protein"/>
</dbReference>
<dbReference type="Bgee" id="ENSG00000125046">
    <property type="expression patterns" value="Expressed in sperm and 108 other cell types or tissues"/>
</dbReference>
<dbReference type="ExpressionAtlas" id="Q9Y2M2">
    <property type="expression patterns" value="baseline and differential"/>
</dbReference>
<dbReference type="GO" id="GO:0005737">
    <property type="term" value="C:cytoplasm"/>
    <property type="evidence" value="ECO:0000314"/>
    <property type="project" value="UniProtKB"/>
</dbReference>
<dbReference type="GO" id="GO:0005634">
    <property type="term" value="C:nucleus"/>
    <property type="evidence" value="ECO:0000314"/>
    <property type="project" value="UniProtKB"/>
</dbReference>
<dbReference type="GO" id="GO:0031072">
    <property type="term" value="F:heat shock protein binding"/>
    <property type="evidence" value="ECO:0007669"/>
    <property type="project" value="InterPro"/>
</dbReference>
<dbReference type="GO" id="GO:0051082">
    <property type="term" value="F:unfolded protein binding"/>
    <property type="evidence" value="ECO:0007669"/>
    <property type="project" value="InterPro"/>
</dbReference>
<dbReference type="GO" id="GO:0042476">
    <property type="term" value="P:odontogenesis"/>
    <property type="evidence" value="ECO:0000315"/>
    <property type="project" value="UniProtKB"/>
</dbReference>
<dbReference type="CDD" id="cd10719">
    <property type="entry name" value="DnaJ_zf"/>
    <property type="match status" value="1"/>
</dbReference>
<dbReference type="InterPro" id="IPR001305">
    <property type="entry name" value="HSP_DnaJ_Cys-rich_dom"/>
</dbReference>
<dbReference type="InterPro" id="IPR052789">
    <property type="entry name" value="SSUH2_homolog"/>
</dbReference>
<dbReference type="PANTHER" id="PTHR48465">
    <property type="entry name" value="PROTEIN SSUH2 HOMOLOG"/>
    <property type="match status" value="1"/>
</dbReference>
<dbReference type="PANTHER" id="PTHR48465:SF1">
    <property type="entry name" value="PROTEIN SSUH2 HOMOLOG"/>
    <property type="match status" value="1"/>
</dbReference>
<organism>
    <name type="scientific">Homo sapiens</name>
    <name type="common">Human</name>
    <dbReference type="NCBI Taxonomy" id="9606"/>
    <lineage>
        <taxon>Eukaryota</taxon>
        <taxon>Metazoa</taxon>
        <taxon>Chordata</taxon>
        <taxon>Craniata</taxon>
        <taxon>Vertebrata</taxon>
        <taxon>Euteleostomi</taxon>
        <taxon>Mammalia</taxon>
        <taxon>Eutheria</taxon>
        <taxon>Euarchontoglires</taxon>
        <taxon>Primates</taxon>
        <taxon>Haplorrhini</taxon>
        <taxon>Catarrhini</taxon>
        <taxon>Hominidae</taxon>
        <taxon>Homo</taxon>
    </lineage>
</organism>
<name>SSUH2_HUMAN</name>
<sequence length="375" mass="42732">MDRDLNEDDSVVDLSFEAESPLAPPTELLERLPSYDWLLQGGRGQIFFPPLEAPGRPQEQRSWPSFLEHRVPAMTEEVAREALLSFVDSKCCYSSTVAGDLVIQELKRQTLCRYRLETFSESRISEWTFQPFTNHSVDGPQRGASPRLWDIKVQGPPMFQEDTRKFQVPHSSLVKECHKCHGRGRYKCSGCHGAGTVRCPSCCGAKRKAKQSRRCQLCAGSGRRRCSTCSGRGNKTCATCKGEKKLLHFIQLVIMWKNSLFEFVSEHRLNCPRELLAKAKGENLFKDENSVVYPIVDFPLRDISLASQRGIAEHSAALASRARVLQQRQTIELIPLTEVHYWYQGKTYVYYIYGTDHQVYAVDYPERYCCGCTIV</sequence>
<accession>Q9Y2M2</accession>
<accession>A6NFA9</accession>
<accession>B3KS84</accession>
<accession>B7Z6E3</accession>
<accession>F5H2S5</accession>
<accession>Q7Z7K4</accession>
<reference key="1">
    <citation type="submission" date="1999-03" db="EMBL/GenBank/DDBJ databases">
        <title>Fetal gene fls485 preferentially expressed in hepatoma.</title>
        <authorList>
            <person name="Nezu J."/>
        </authorList>
    </citation>
    <scope>NUCLEOTIDE SEQUENCE [MRNA] (ISOFORM 1)</scope>
    <source>
        <tissue>Liver</tissue>
    </source>
</reference>
<reference key="2">
    <citation type="journal article" date="2004" name="Nat. Genet.">
        <title>Complete sequencing and characterization of 21,243 full-length human cDNAs.</title>
        <authorList>
            <person name="Ota T."/>
            <person name="Suzuki Y."/>
            <person name="Nishikawa T."/>
            <person name="Otsuki T."/>
            <person name="Sugiyama T."/>
            <person name="Irie R."/>
            <person name="Wakamatsu A."/>
            <person name="Hayashi K."/>
            <person name="Sato H."/>
            <person name="Nagai K."/>
            <person name="Kimura K."/>
            <person name="Makita H."/>
            <person name="Sekine M."/>
            <person name="Obayashi M."/>
            <person name="Nishi T."/>
            <person name="Shibahara T."/>
            <person name="Tanaka T."/>
            <person name="Ishii S."/>
            <person name="Yamamoto J."/>
            <person name="Saito K."/>
            <person name="Kawai Y."/>
            <person name="Isono Y."/>
            <person name="Nakamura Y."/>
            <person name="Nagahari K."/>
            <person name="Murakami K."/>
            <person name="Yasuda T."/>
            <person name="Iwayanagi T."/>
            <person name="Wagatsuma M."/>
            <person name="Shiratori A."/>
            <person name="Sudo H."/>
            <person name="Hosoiri T."/>
            <person name="Kaku Y."/>
            <person name="Kodaira H."/>
            <person name="Kondo H."/>
            <person name="Sugawara M."/>
            <person name="Takahashi M."/>
            <person name="Kanda K."/>
            <person name="Yokoi T."/>
            <person name="Furuya T."/>
            <person name="Kikkawa E."/>
            <person name="Omura Y."/>
            <person name="Abe K."/>
            <person name="Kamihara K."/>
            <person name="Katsuta N."/>
            <person name="Sato K."/>
            <person name="Tanikawa M."/>
            <person name="Yamazaki M."/>
            <person name="Ninomiya K."/>
            <person name="Ishibashi T."/>
            <person name="Yamashita H."/>
            <person name="Murakawa K."/>
            <person name="Fujimori K."/>
            <person name="Tanai H."/>
            <person name="Kimata M."/>
            <person name="Watanabe M."/>
            <person name="Hiraoka S."/>
            <person name="Chiba Y."/>
            <person name="Ishida S."/>
            <person name="Ono Y."/>
            <person name="Takiguchi S."/>
            <person name="Watanabe S."/>
            <person name="Yosida M."/>
            <person name="Hotuta T."/>
            <person name="Kusano J."/>
            <person name="Kanehori K."/>
            <person name="Takahashi-Fujii A."/>
            <person name="Hara H."/>
            <person name="Tanase T.-O."/>
            <person name="Nomura Y."/>
            <person name="Togiya S."/>
            <person name="Komai F."/>
            <person name="Hara R."/>
            <person name="Takeuchi K."/>
            <person name="Arita M."/>
            <person name="Imose N."/>
            <person name="Musashino K."/>
            <person name="Yuuki H."/>
            <person name="Oshima A."/>
            <person name="Sasaki N."/>
            <person name="Aotsuka S."/>
            <person name="Yoshikawa Y."/>
            <person name="Matsunawa H."/>
            <person name="Ichihara T."/>
            <person name="Shiohata N."/>
            <person name="Sano S."/>
            <person name="Moriya S."/>
            <person name="Momiyama H."/>
            <person name="Satoh N."/>
            <person name="Takami S."/>
            <person name="Terashima Y."/>
            <person name="Suzuki O."/>
            <person name="Nakagawa S."/>
            <person name="Senoh A."/>
            <person name="Mizoguchi H."/>
            <person name="Goto Y."/>
            <person name="Shimizu F."/>
            <person name="Wakebe H."/>
            <person name="Hishigaki H."/>
            <person name="Watanabe T."/>
            <person name="Sugiyama A."/>
            <person name="Takemoto M."/>
            <person name="Kawakami B."/>
            <person name="Yamazaki M."/>
            <person name="Watanabe K."/>
            <person name="Kumagai A."/>
            <person name="Itakura S."/>
            <person name="Fukuzumi Y."/>
            <person name="Fujimori Y."/>
            <person name="Komiyama M."/>
            <person name="Tashiro H."/>
            <person name="Tanigami A."/>
            <person name="Fujiwara T."/>
            <person name="Ono T."/>
            <person name="Yamada K."/>
            <person name="Fujii Y."/>
            <person name="Ozaki K."/>
            <person name="Hirao M."/>
            <person name="Ohmori Y."/>
            <person name="Kawabata A."/>
            <person name="Hikiji T."/>
            <person name="Kobatake N."/>
            <person name="Inagaki H."/>
            <person name="Ikema Y."/>
            <person name="Okamoto S."/>
            <person name="Okitani R."/>
            <person name="Kawakami T."/>
            <person name="Noguchi S."/>
            <person name="Itoh T."/>
            <person name="Shigeta K."/>
            <person name="Senba T."/>
            <person name="Matsumura K."/>
            <person name="Nakajima Y."/>
            <person name="Mizuno T."/>
            <person name="Morinaga M."/>
            <person name="Sasaki M."/>
            <person name="Togashi T."/>
            <person name="Oyama M."/>
            <person name="Hata H."/>
            <person name="Watanabe M."/>
            <person name="Komatsu T."/>
            <person name="Mizushima-Sugano J."/>
            <person name="Satoh T."/>
            <person name="Shirai Y."/>
            <person name="Takahashi Y."/>
            <person name="Nakagawa K."/>
            <person name="Okumura K."/>
            <person name="Nagase T."/>
            <person name="Nomura N."/>
            <person name="Kikuchi H."/>
            <person name="Masuho Y."/>
            <person name="Yamashita R."/>
            <person name="Nakai K."/>
            <person name="Yada T."/>
            <person name="Nakamura Y."/>
            <person name="Ohara O."/>
            <person name="Isogai T."/>
            <person name="Sugano S."/>
        </authorList>
    </citation>
    <scope>NUCLEOTIDE SEQUENCE [LARGE SCALE MRNA] (ISOFORMS 1 AND 2)</scope>
    <source>
        <tissue>Placenta</tissue>
        <tissue>Testis</tissue>
    </source>
</reference>
<reference key="3">
    <citation type="journal article" date="2006" name="Nature">
        <title>The DNA sequence, annotation and analysis of human chromosome 3.</title>
        <authorList>
            <person name="Muzny D.M."/>
            <person name="Scherer S.E."/>
            <person name="Kaul R."/>
            <person name="Wang J."/>
            <person name="Yu J."/>
            <person name="Sudbrak R."/>
            <person name="Buhay C.J."/>
            <person name="Chen R."/>
            <person name="Cree A."/>
            <person name="Ding Y."/>
            <person name="Dugan-Rocha S."/>
            <person name="Gill R."/>
            <person name="Gunaratne P."/>
            <person name="Harris R.A."/>
            <person name="Hawes A.C."/>
            <person name="Hernandez J."/>
            <person name="Hodgson A.V."/>
            <person name="Hume J."/>
            <person name="Jackson A."/>
            <person name="Khan Z.M."/>
            <person name="Kovar-Smith C."/>
            <person name="Lewis L.R."/>
            <person name="Lozado R.J."/>
            <person name="Metzker M.L."/>
            <person name="Milosavljevic A."/>
            <person name="Miner G.R."/>
            <person name="Morgan M.B."/>
            <person name="Nazareth L.V."/>
            <person name="Scott G."/>
            <person name="Sodergren E."/>
            <person name="Song X.-Z."/>
            <person name="Steffen D."/>
            <person name="Wei S."/>
            <person name="Wheeler D.A."/>
            <person name="Wright M.W."/>
            <person name="Worley K.C."/>
            <person name="Yuan Y."/>
            <person name="Zhang Z."/>
            <person name="Adams C.Q."/>
            <person name="Ansari-Lari M.A."/>
            <person name="Ayele M."/>
            <person name="Brown M.J."/>
            <person name="Chen G."/>
            <person name="Chen Z."/>
            <person name="Clendenning J."/>
            <person name="Clerc-Blankenburg K.P."/>
            <person name="Chen R."/>
            <person name="Chen Z."/>
            <person name="Davis C."/>
            <person name="Delgado O."/>
            <person name="Dinh H.H."/>
            <person name="Dong W."/>
            <person name="Draper H."/>
            <person name="Ernst S."/>
            <person name="Fu G."/>
            <person name="Gonzalez-Garay M.L."/>
            <person name="Garcia D.K."/>
            <person name="Gillett W."/>
            <person name="Gu J."/>
            <person name="Hao B."/>
            <person name="Haugen E."/>
            <person name="Havlak P."/>
            <person name="He X."/>
            <person name="Hennig S."/>
            <person name="Hu S."/>
            <person name="Huang W."/>
            <person name="Jackson L.R."/>
            <person name="Jacob L.S."/>
            <person name="Kelly S.H."/>
            <person name="Kube M."/>
            <person name="Levy R."/>
            <person name="Li Z."/>
            <person name="Liu B."/>
            <person name="Liu J."/>
            <person name="Liu W."/>
            <person name="Lu J."/>
            <person name="Maheshwari M."/>
            <person name="Nguyen B.-V."/>
            <person name="Okwuonu G.O."/>
            <person name="Palmeiri A."/>
            <person name="Pasternak S."/>
            <person name="Perez L.M."/>
            <person name="Phelps K.A."/>
            <person name="Plopper F.J."/>
            <person name="Qiang B."/>
            <person name="Raymond C."/>
            <person name="Rodriguez R."/>
            <person name="Saenphimmachak C."/>
            <person name="Santibanez J."/>
            <person name="Shen H."/>
            <person name="Shen Y."/>
            <person name="Subramanian S."/>
            <person name="Tabor P.E."/>
            <person name="Verduzco D."/>
            <person name="Waldron L."/>
            <person name="Wang J."/>
            <person name="Wang J."/>
            <person name="Wang Q."/>
            <person name="Williams G.A."/>
            <person name="Wong G.K.-S."/>
            <person name="Yao Z."/>
            <person name="Zhang J."/>
            <person name="Zhang X."/>
            <person name="Zhao G."/>
            <person name="Zhou J."/>
            <person name="Zhou Y."/>
            <person name="Nelson D."/>
            <person name="Lehrach H."/>
            <person name="Reinhardt R."/>
            <person name="Naylor S.L."/>
            <person name="Yang H."/>
            <person name="Olson M."/>
            <person name="Weinstock G."/>
            <person name="Gibbs R.A."/>
        </authorList>
    </citation>
    <scope>NUCLEOTIDE SEQUENCE [LARGE SCALE GENOMIC DNA]</scope>
</reference>
<reference key="4">
    <citation type="submission" date="2005-07" db="EMBL/GenBank/DDBJ databases">
        <authorList>
            <person name="Mural R.J."/>
            <person name="Istrail S."/>
            <person name="Sutton G.G."/>
            <person name="Florea L."/>
            <person name="Halpern A.L."/>
            <person name="Mobarry C.M."/>
            <person name="Lippert R."/>
            <person name="Walenz B."/>
            <person name="Shatkay H."/>
            <person name="Dew I."/>
            <person name="Miller J.R."/>
            <person name="Flanigan M.J."/>
            <person name="Edwards N.J."/>
            <person name="Bolanos R."/>
            <person name="Fasulo D."/>
            <person name="Halldorsson B.V."/>
            <person name="Hannenhalli S."/>
            <person name="Turner R."/>
            <person name="Yooseph S."/>
            <person name="Lu F."/>
            <person name="Nusskern D.R."/>
            <person name="Shue B.C."/>
            <person name="Zheng X.H."/>
            <person name="Zhong F."/>
            <person name="Delcher A.L."/>
            <person name="Huson D.H."/>
            <person name="Kravitz S.A."/>
            <person name="Mouchard L."/>
            <person name="Reinert K."/>
            <person name="Remington K.A."/>
            <person name="Clark A.G."/>
            <person name="Waterman M.S."/>
            <person name="Eichler E.E."/>
            <person name="Adams M.D."/>
            <person name="Hunkapiller M.W."/>
            <person name="Myers E.W."/>
            <person name="Venter J.C."/>
        </authorList>
    </citation>
    <scope>NUCLEOTIDE SEQUENCE [LARGE SCALE GENOMIC DNA]</scope>
</reference>
<reference key="5">
    <citation type="journal article" date="2004" name="Genome Res.">
        <title>The status, quality, and expansion of the NIH full-length cDNA project: the Mammalian Gene Collection (MGC).</title>
        <authorList>
            <consortium name="The MGC Project Team"/>
        </authorList>
    </citation>
    <scope>NUCLEOTIDE SEQUENCE [LARGE SCALE MRNA] (ISOFORM 3)</scope>
    <source>
        <tissue>Liver</tissue>
    </source>
</reference>
<reference key="6">
    <citation type="journal article" date="2010" name="BMC Gastroenterol.">
        <title>Small intestinal mucosa expression of putative chaperone fls485.</title>
        <authorList>
            <person name="Reinartz A."/>
            <person name="Ehling J."/>
            <person name="Franz S."/>
            <person name="Simon V."/>
            <person name="Bravo I.G."/>
            <person name="Tessmer C."/>
            <person name="Zentgraf H."/>
            <person name="Lyer S."/>
            <person name="Schneider U."/>
            <person name="Koster J."/>
            <person name="Raupach K."/>
            <person name="Kammerer E."/>
            <person name="Klaus C."/>
            <person name="Tischendorf J.J."/>
            <person name="Kopitz J."/>
            <person name="Alonso A."/>
            <person name="Gassler N."/>
        </authorList>
    </citation>
    <scope>SUBCELLULAR LOCATION</scope>
    <scope>TISSUE SPECIFICITY</scope>
</reference>
<reference key="7">
    <citation type="journal article" date="2017" name="Hum. Mutat.">
        <title>Mutation in SSUH2 causes autosomal-dominant dentin dysplasia type I.</title>
        <authorList>
            <person name="Xiong F."/>
            <person name="Ji Z."/>
            <person name="Liu Y."/>
            <person name="Zhang Y."/>
            <person name="Hu L."/>
            <person name="Yang Q."/>
            <person name="Qiu Q."/>
            <person name="Zhao L."/>
            <person name="Chen D."/>
            <person name="Tian Z."/>
            <person name="Shang X."/>
            <person name="Zhang L."/>
            <person name="Wei X."/>
            <person name="Liu C."/>
            <person name="Yu Q."/>
            <person name="Zhang M."/>
            <person name="Cheng J."/>
            <person name="Xiong J."/>
            <person name="Li D."/>
            <person name="Wu X."/>
            <person name="Yuan H."/>
            <person name="Zhang W."/>
            <person name="Xu X."/>
        </authorList>
    </citation>
    <scope>INVOLVEMENT IN DENTIN DYSPLASIA</scope>
    <scope>VARIANT DENTIN DYSPLASIA GLN-140</scope>
    <scope>SUBCELLULAR LOCATION</scope>
    <scope>FUNCTION</scope>
    <scope>TISSUE SPECIFICITY</scope>
</reference>
<protein>
    <recommendedName>
        <fullName evidence="3">Protein SSUH2 homolog</fullName>
    </recommendedName>
    <alternativeName>
        <fullName>Protein ssu-2 homolog</fullName>
    </alternativeName>
</protein>
<evidence type="ECO:0000269" key="1">
    <source>
    </source>
</evidence>
<evidence type="ECO:0000269" key="2">
    <source>
    </source>
</evidence>
<evidence type="ECO:0000305" key="3"/>
<evidence type="ECO:0000312" key="4">
    <source>
        <dbReference type="HGNC" id="HGNC:24809"/>
    </source>
</evidence>
<comment type="function">
    <text evidence="2">Plays a role in odontogenesis.</text>
</comment>
<comment type="interaction">
    <interactant intactId="EBI-12231891">
        <id>Q9Y2M2-2</id>
    </interactant>
    <interactant intactId="EBI-740785">
        <id>P49639</id>
        <label>HOXA1</label>
    </interactant>
    <organismsDiffer>false</organismsDiffer>
    <experiments>5</experiments>
</comment>
<comment type="interaction">
    <interactant intactId="EBI-12231891">
        <id>Q9Y2M2-2</id>
    </interactant>
    <interactant intactId="EBI-739909">
        <id>Q969R5</id>
        <label>L3MBTL2</label>
    </interactant>
    <organismsDiffer>false</organismsDiffer>
    <experiments>3</experiments>
</comment>
<comment type="interaction">
    <interactant intactId="EBI-12231891">
        <id>Q9Y2M2-2</id>
    </interactant>
    <interactant intactId="EBI-12029004">
        <id>P78424</id>
        <label>POU6F2</label>
    </interactant>
    <organismsDiffer>false</organismsDiffer>
    <experiments>3</experiments>
</comment>
<comment type="subcellular location">
    <subcellularLocation>
        <location evidence="1">Cytoplasm</location>
    </subcellularLocation>
    <subcellularLocation>
        <location evidence="2">Nucleus</location>
    </subcellularLocation>
</comment>
<comment type="alternative products">
    <event type="alternative splicing"/>
    <isoform>
        <id>Q9Y2M2-2</id>
        <name>2</name>
        <sequence type="displayed"/>
    </isoform>
    <isoform>
        <id>Q9Y2M2-1</id>
        <name>1</name>
        <sequence type="described" ref="VSP_061238"/>
    </isoform>
    <isoform>
        <id>Q9Y2M2-3</id>
        <name>3</name>
        <sequence type="described" ref="VSP_061237"/>
    </isoform>
</comment>
<comment type="tissue specificity">
    <text evidence="1 2">Expressed in enterocytes of small and large intestinal mucosa (at protein level). Expressed in chromaffine and interstitial cells. Expressed in peripheral blood and gingival cells (PubMed:27680507).</text>
</comment>
<comment type="disease">
    <text evidence="2">Defects in SSUH2 are associated with dentin dysplasia, a genetic disorder characterized by severe tooth hypermobility, short dental roots, and obliterated pulp chambers.</text>
</comment>
<gene>
    <name evidence="4" type="primary">SSUH2</name>
    <name type="synonym">C3orf32</name>
    <name type="ORF">FLS485</name>
</gene>